<proteinExistence type="evidence at protein level"/>
<protein>
    <recommendedName>
        <fullName>Magnesium transporter MRS2-F</fullName>
    </recommendedName>
</protein>
<comment type="function">
    <text evidence="1">Magnesium transporter that may mediate the influx of magnesium.</text>
</comment>
<comment type="subunit">
    <text evidence="4">Interacts with CYCB2-2.</text>
</comment>
<comment type="subcellular location">
    <subcellularLocation>
        <location evidence="1">Membrane</location>
        <topology evidence="1">Multi-pass membrane protein</topology>
    </subcellularLocation>
</comment>
<comment type="similarity">
    <text evidence="5">Belongs to the CorA metal ion transporter (MIT) (TC 1.A.35.5) family.</text>
</comment>
<reference key="1">
    <citation type="journal article" date="2002" name="Nature">
        <title>The genome sequence and structure of rice chromosome 1.</title>
        <authorList>
            <person name="Sasaki T."/>
            <person name="Matsumoto T."/>
            <person name="Yamamoto K."/>
            <person name="Sakata K."/>
            <person name="Baba T."/>
            <person name="Katayose Y."/>
            <person name="Wu J."/>
            <person name="Niimura Y."/>
            <person name="Cheng Z."/>
            <person name="Nagamura Y."/>
            <person name="Antonio B.A."/>
            <person name="Kanamori H."/>
            <person name="Hosokawa S."/>
            <person name="Masukawa M."/>
            <person name="Arikawa K."/>
            <person name="Chiden Y."/>
            <person name="Hayashi M."/>
            <person name="Okamoto M."/>
            <person name="Ando T."/>
            <person name="Aoki H."/>
            <person name="Arita K."/>
            <person name="Hamada M."/>
            <person name="Harada C."/>
            <person name="Hijishita S."/>
            <person name="Honda M."/>
            <person name="Ichikawa Y."/>
            <person name="Idonuma A."/>
            <person name="Iijima M."/>
            <person name="Ikeda M."/>
            <person name="Ikeno M."/>
            <person name="Ito S."/>
            <person name="Ito T."/>
            <person name="Ito Y."/>
            <person name="Ito Y."/>
            <person name="Iwabuchi A."/>
            <person name="Kamiya K."/>
            <person name="Karasawa W."/>
            <person name="Katagiri S."/>
            <person name="Kikuta A."/>
            <person name="Kobayashi N."/>
            <person name="Kono I."/>
            <person name="Machita K."/>
            <person name="Maehara T."/>
            <person name="Mizuno H."/>
            <person name="Mizubayashi T."/>
            <person name="Mukai Y."/>
            <person name="Nagasaki H."/>
            <person name="Nakashima M."/>
            <person name="Nakama Y."/>
            <person name="Nakamichi Y."/>
            <person name="Nakamura M."/>
            <person name="Namiki N."/>
            <person name="Negishi M."/>
            <person name="Ohta I."/>
            <person name="Ono N."/>
            <person name="Saji S."/>
            <person name="Sakai K."/>
            <person name="Shibata M."/>
            <person name="Shimokawa T."/>
            <person name="Shomura A."/>
            <person name="Song J."/>
            <person name="Takazaki Y."/>
            <person name="Terasawa K."/>
            <person name="Tsuji K."/>
            <person name="Waki K."/>
            <person name="Yamagata H."/>
            <person name="Yamane H."/>
            <person name="Yoshiki S."/>
            <person name="Yoshihara R."/>
            <person name="Yukawa K."/>
            <person name="Zhong H."/>
            <person name="Iwama H."/>
            <person name="Endo T."/>
            <person name="Ito H."/>
            <person name="Hahn J.H."/>
            <person name="Kim H.-I."/>
            <person name="Eun M.-Y."/>
            <person name="Yano M."/>
            <person name="Jiang J."/>
            <person name="Gojobori T."/>
        </authorList>
    </citation>
    <scope>NUCLEOTIDE SEQUENCE [LARGE SCALE GENOMIC DNA]</scope>
    <source>
        <strain>cv. Nipponbare</strain>
    </source>
</reference>
<reference key="2">
    <citation type="journal article" date="2005" name="Nature">
        <title>The map-based sequence of the rice genome.</title>
        <authorList>
            <consortium name="International rice genome sequencing project (IRGSP)"/>
        </authorList>
    </citation>
    <scope>NUCLEOTIDE SEQUENCE [LARGE SCALE GENOMIC DNA]</scope>
    <source>
        <strain>cv. Nipponbare</strain>
    </source>
</reference>
<reference key="3">
    <citation type="journal article" date="2013" name="Rice">
        <title>Improvement of the Oryza sativa Nipponbare reference genome using next generation sequence and optical map data.</title>
        <authorList>
            <person name="Kawahara Y."/>
            <person name="de la Bastide M."/>
            <person name="Hamilton J.P."/>
            <person name="Kanamori H."/>
            <person name="McCombie W.R."/>
            <person name="Ouyang S."/>
            <person name="Schwartz D.C."/>
            <person name="Tanaka T."/>
            <person name="Wu J."/>
            <person name="Zhou S."/>
            <person name="Childs K.L."/>
            <person name="Davidson R.M."/>
            <person name="Lin H."/>
            <person name="Quesada-Ocampo L."/>
            <person name="Vaillancourt B."/>
            <person name="Sakai H."/>
            <person name="Lee S.S."/>
            <person name="Kim J."/>
            <person name="Numa H."/>
            <person name="Itoh T."/>
            <person name="Buell C.R."/>
            <person name="Matsumoto T."/>
        </authorList>
    </citation>
    <scope>GENOME REANNOTATION</scope>
    <source>
        <strain>cv. Nipponbare</strain>
    </source>
</reference>
<reference key="4">
    <citation type="journal article" date="2005" name="PLoS Biol.">
        <title>The genomes of Oryza sativa: a history of duplications.</title>
        <authorList>
            <person name="Yu J."/>
            <person name="Wang J."/>
            <person name="Lin W."/>
            <person name="Li S."/>
            <person name="Li H."/>
            <person name="Zhou J."/>
            <person name="Ni P."/>
            <person name="Dong W."/>
            <person name="Hu S."/>
            <person name="Zeng C."/>
            <person name="Zhang J."/>
            <person name="Zhang Y."/>
            <person name="Li R."/>
            <person name="Xu Z."/>
            <person name="Li S."/>
            <person name="Li X."/>
            <person name="Zheng H."/>
            <person name="Cong L."/>
            <person name="Lin L."/>
            <person name="Yin J."/>
            <person name="Geng J."/>
            <person name="Li G."/>
            <person name="Shi J."/>
            <person name="Liu J."/>
            <person name="Lv H."/>
            <person name="Li J."/>
            <person name="Wang J."/>
            <person name="Deng Y."/>
            <person name="Ran L."/>
            <person name="Shi X."/>
            <person name="Wang X."/>
            <person name="Wu Q."/>
            <person name="Li C."/>
            <person name="Ren X."/>
            <person name="Wang J."/>
            <person name="Wang X."/>
            <person name="Li D."/>
            <person name="Liu D."/>
            <person name="Zhang X."/>
            <person name="Ji Z."/>
            <person name="Zhao W."/>
            <person name="Sun Y."/>
            <person name="Zhang Z."/>
            <person name="Bao J."/>
            <person name="Han Y."/>
            <person name="Dong L."/>
            <person name="Ji J."/>
            <person name="Chen P."/>
            <person name="Wu S."/>
            <person name="Liu J."/>
            <person name="Xiao Y."/>
            <person name="Bu D."/>
            <person name="Tan J."/>
            <person name="Yang L."/>
            <person name="Ye C."/>
            <person name="Zhang J."/>
            <person name="Xu J."/>
            <person name="Zhou Y."/>
            <person name="Yu Y."/>
            <person name="Zhang B."/>
            <person name="Zhuang S."/>
            <person name="Wei H."/>
            <person name="Liu B."/>
            <person name="Lei M."/>
            <person name="Yu H."/>
            <person name="Li Y."/>
            <person name="Xu H."/>
            <person name="Wei S."/>
            <person name="He X."/>
            <person name="Fang L."/>
            <person name="Zhang Z."/>
            <person name="Zhang Y."/>
            <person name="Huang X."/>
            <person name="Su Z."/>
            <person name="Tong W."/>
            <person name="Li J."/>
            <person name="Tong Z."/>
            <person name="Li S."/>
            <person name="Ye J."/>
            <person name="Wang L."/>
            <person name="Fang L."/>
            <person name="Lei T."/>
            <person name="Chen C.-S."/>
            <person name="Chen H.-C."/>
            <person name="Xu Z."/>
            <person name="Li H."/>
            <person name="Huang H."/>
            <person name="Zhang F."/>
            <person name="Xu H."/>
            <person name="Li N."/>
            <person name="Zhao C."/>
            <person name="Li S."/>
            <person name="Dong L."/>
            <person name="Huang Y."/>
            <person name="Li L."/>
            <person name="Xi Y."/>
            <person name="Qi Q."/>
            <person name="Li W."/>
            <person name="Zhang B."/>
            <person name="Hu W."/>
            <person name="Zhang Y."/>
            <person name="Tian X."/>
            <person name="Jiao Y."/>
            <person name="Liang X."/>
            <person name="Jin J."/>
            <person name="Gao L."/>
            <person name="Zheng W."/>
            <person name="Hao B."/>
            <person name="Liu S.-M."/>
            <person name="Wang W."/>
            <person name="Yuan L."/>
            <person name="Cao M."/>
            <person name="McDermott J."/>
            <person name="Samudrala R."/>
            <person name="Wang J."/>
            <person name="Wong G.K.-S."/>
            <person name="Yang H."/>
        </authorList>
    </citation>
    <scope>NUCLEOTIDE SEQUENCE [LARGE SCALE GENOMIC DNA]</scope>
    <source>
        <strain>cv. Nipponbare</strain>
    </source>
</reference>
<reference key="5">
    <citation type="journal article" date="2003" name="Science">
        <title>Collection, mapping, and annotation of over 28,000 cDNA clones from japonica rice.</title>
        <authorList>
            <consortium name="The rice full-length cDNA consortium"/>
        </authorList>
    </citation>
    <scope>NUCLEOTIDE SEQUENCE [LARGE SCALE MRNA]</scope>
    <source>
        <strain>cv. Nipponbare</strain>
    </source>
</reference>
<reference key="6">
    <citation type="journal article" date="2003" name="Plant Mol. Biol.">
        <title>Identification of rice (Oryza sativa) proteins linked to the cyclin-mediated regulation of the cell cycle.</title>
        <authorList>
            <person name="Cooper B."/>
            <person name="Hutchison D."/>
            <person name="Park S."/>
            <person name="Guimil S."/>
            <person name="Luginbuehl P."/>
            <person name="Ellero C."/>
            <person name="Goff S.A."/>
            <person name="Glazebrook J."/>
        </authorList>
    </citation>
    <scope>NUCLEOTIDE SEQUENCE [MRNA] OF 120-277</scope>
    <scope>INTERACTION WITH CYCB2-2</scope>
    <source>
        <strain>cv. Nipponbare</strain>
    </source>
</reference>
<reference key="7">
    <citation type="journal article" date="2009" name="Plant Cell">
        <title>A root-expressed magnesium transporter of the MRS2/MGT gene family in Arabidopsis thaliana allows for growth in low-Mg2+ environments.</title>
        <authorList>
            <person name="Gebert M."/>
            <person name="Meschenmoser K."/>
            <person name="Svidova S."/>
            <person name="Weghuber J."/>
            <person name="Schweyen R."/>
            <person name="Eifler K."/>
            <person name="Lenz H."/>
            <person name="Weyand K."/>
            <person name="Knoop V."/>
        </authorList>
    </citation>
    <scope>GENE FAMILY</scope>
</reference>
<sequence length="444" mass="48356">MRPSAAAGGGGGGGGRRKAAAAAAAASREWLVVPASGQARVEEAGKHAVMARTGLPARDLRVLDPLLSYPSTILGRERAIVVNLERVKAVITAAEVLLPNSKDPAFASFVCDLQARVLASSSDQAAEFTDMEGESSAVTSPFPALTSTTPNELEMTNKNSNVVGGMTHSNSMPTLTAAKDGNTKVLPFEFRALEVCLESACRSLEEETSTLEQEAYPALDELTSKISTLNLERVRQIKSRLVAISGRVQKVRDELEHLLDDEMDMAEMYLTEKLTRQEISETSSRVEVDDPSQLEVDRDEDYRSEADVSNGTFIGYKPHIEELEMLLEAYFVQIDGTLNKLSHLREYVDDTEDYINIMLDDKQNQLLQMGVMLSTATVVITAGVAVVGLFGMNIGISLYADPTNEEEKRASNMKFWETTLGTIAGCTVMYIVAMGWGKRSGLLQ</sequence>
<accession>Q8L4S2</accession>
<accession>A0A0P0VBV1</accession>
<accession>Q84VA9</accession>
<name>MRS2F_ORYSJ</name>
<dbReference type="EMBL" id="AP003380">
    <property type="protein sequence ID" value="BAB92573.1"/>
    <property type="molecule type" value="Genomic_DNA"/>
</dbReference>
<dbReference type="EMBL" id="AP003416">
    <property type="protein sequence ID" value="BAB92606.1"/>
    <property type="molecule type" value="Genomic_DNA"/>
</dbReference>
<dbReference type="EMBL" id="AP006531">
    <property type="protein sequence ID" value="BAD82756.1"/>
    <property type="molecule type" value="Genomic_DNA"/>
</dbReference>
<dbReference type="EMBL" id="AP014957">
    <property type="protein sequence ID" value="BAS75810.1"/>
    <property type="molecule type" value="Genomic_DNA"/>
</dbReference>
<dbReference type="EMBL" id="CM000138">
    <property type="protein sequence ID" value="EAZ14556.1"/>
    <property type="molecule type" value="Genomic_DNA"/>
</dbReference>
<dbReference type="EMBL" id="AK120875">
    <property type="protein sequence ID" value="BAH00210.1"/>
    <property type="molecule type" value="mRNA"/>
</dbReference>
<dbReference type="EMBL" id="AY224580">
    <property type="protein sequence ID" value="AAO72700.1"/>
    <property type="molecule type" value="mRNA"/>
</dbReference>
<dbReference type="RefSeq" id="XP_015616461.1">
    <property type="nucleotide sequence ID" value="XM_015760975.1"/>
</dbReference>
<dbReference type="SMR" id="Q8L4S2"/>
<dbReference type="FunCoup" id="Q8L4S2">
    <property type="interactions" value="901"/>
</dbReference>
<dbReference type="PaxDb" id="39947-Q8L4S2"/>
<dbReference type="EnsemblPlants" id="Os01t0908500-01">
    <property type="protein sequence ID" value="Os01t0908500-01"/>
    <property type="gene ID" value="Os01g0908500"/>
</dbReference>
<dbReference type="Gramene" id="Os01t0908500-01">
    <property type="protein sequence ID" value="Os01t0908500-01"/>
    <property type="gene ID" value="Os01g0908500"/>
</dbReference>
<dbReference type="eggNOG" id="KOG2662">
    <property type="taxonomic scope" value="Eukaryota"/>
</dbReference>
<dbReference type="HOGENOM" id="CLU_034694_0_0_1"/>
<dbReference type="InParanoid" id="Q8L4S2"/>
<dbReference type="OMA" id="GPGRFIW"/>
<dbReference type="OrthoDB" id="10251508at2759"/>
<dbReference type="Proteomes" id="UP000000763">
    <property type="component" value="Chromosome 1"/>
</dbReference>
<dbReference type="Proteomes" id="UP000007752">
    <property type="component" value="Chromosome 1"/>
</dbReference>
<dbReference type="Proteomes" id="UP000059680">
    <property type="component" value="Chromosome 1"/>
</dbReference>
<dbReference type="ExpressionAtlas" id="Q8L4S2">
    <property type="expression patterns" value="baseline and differential"/>
</dbReference>
<dbReference type="GO" id="GO:0016020">
    <property type="term" value="C:membrane"/>
    <property type="evidence" value="ECO:0007669"/>
    <property type="project" value="UniProtKB-SubCell"/>
</dbReference>
<dbReference type="GO" id="GO:0015095">
    <property type="term" value="F:magnesium ion transmembrane transporter activity"/>
    <property type="evidence" value="ECO:0000318"/>
    <property type="project" value="GO_Central"/>
</dbReference>
<dbReference type="GO" id="GO:0015693">
    <property type="term" value="P:magnesium ion transport"/>
    <property type="evidence" value="ECO:0000318"/>
    <property type="project" value="GO_Central"/>
</dbReference>
<dbReference type="CDD" id="cd12823">
    <property type="entry name" value="Mrs2_Mfm1p-like"/>
    <property type="match status" value="1"/>
</dbReference>
<dbReference type="FunFam" id="2.40.128.330:FF:000001">
    <property type="entry name" value="Magnesium transporter MRS2-1"/>
    <property type="match status" value="1"/>
</dbReference>
<dbReference type="FunFam" id="1.20.58.340:FF:000022">
    <property type="entry name" value="Magnesium transporter MRS2-F"/>
    <property type="match status" value="1"/>
</dbReference>
<dbReference type="Gene3D" id="2.40.128.330">
    <property type="match status" value="1"/>
</dbReference>
<dbReference type="Gene3D" id="1.20.58.340">
    <property type="entry name" value="Magnesium transport protein CorA, transmembrane region"/>
    <property type="match status" value="1"/>
</dbReference>
<dbReference type="InterPro" id="IPR039204">
    <property type="entry name" value="MRS2-like"/>
</dbReference>
<dbReference type="PANTHER" id="PTHR13890:SF29">
    <property type="entry name" value="MAGNESIUM TRANSPORTER MRS2-F"/>
    <property type="match status" value="1"/>
</dbReference>
<dbReference type="PANTHER" id="PTHR13890">
    <property type="entry name" value="RNA SPLICING PROTEIN MRS2, MITOCHONDRIAL"/>
    <property type="match status" value="1"/>
</dbReference>
<dbReference type="Pfam" id="PF22099">
    <property type="entry name" value="MRS2-like"/>
    <property type="match status" value="3"/>
</dbReference>
<evidence type="ECO:0000250" key="1"/>
<evidence type="ECO:0000255" key="2"/>
<evidence type="ECO:0000256" key="3">
    <source>
        <dbReference type="SAM" id="MobiDB-lite"/>
    </source>
</evidence>
<evidence type="ECO:0000269" key="4">
    <source>
    </source>
</evidence>
<evidence type="ECO:0000305" key="5"/>
<organism>
    <name type="scientific">Oryza sativa subsp. japonica</name>
    <name type="common">Rice</name>
    <dbReference type="NCBI Taxonomy" id="39947"/>
    <lineage>
        <taxon>Eukaryota</taxon>
        <taxon>Viridiplantae</taxon>
        <taxon>Streptophyta</taxon>
        <taxon>Embryophyta</taxon>
        <taxon>Tracheophyta</taxon>
        <taxon>Spermatophyta</taxon>
        <taxon>Magnoliopsida</taxon>
        <taxon>Liliopsida</taxon>
        <taxon>Poales</taxon>
        <taxon>Poaceae</taxon>
        <taxon>BOP clade</taxon>
        <taxon>Oryzoideae</taxon>
        <taxon>Oryzeae</taxon>
        <taxon>Oryzinae</taxon>
        <taxon>Oryza</taxon>
        <taxon>Oryza sativa</taxon>
    </lineage>
</organism>
<keyword id="KW-0175">Coiled coil</keyword>
<keyword id="KW-0406">Ion transport</keyword>
<keyword id="KW-0460">Magnesium</keyword>
<keyword id="KW-0472">Membrane</keyword>
<keyword id="KW-1185">Reference proteome</keyword>
<keyword id="KW-0812">Transmembrane</keyword>
<keyword id="KW-1133">Transmembrane helix</keyword>
<keyword id="KW-0813">Transport</keyword>
<gene>
    <name type="primary">MRS2-F</name>
    <name type="ordered locus">Os01g0908500</name>
    <name type="ordered locus">LOC_Os01g68040</name>
    <name type="ORF">B1417F08.35</name>
    <name type="ORF">OsJ_04478</name>
    <name type="ORF">P0456E05.8</name>
    <name type="ORF">P0497A05.17</name>
</gene>
<feature type="chain" id="PRO_0000394275" description="Magnesium transporter MRS2-F">
    <location>
        <begin position="1"/>
        <end position="444"/>
    </location>
</feature>
<feature type="transmembrane region" description="Helical" evidence="2">
    <location>
        <begin position="370"/>
        <end position="390"/>
    </location>
</feature>
<feature type="transmembrane region" description="Helical" evidence="2">
    <location>
        <begin position="415"/>
        <end position="435"/>
    </location>
</feature>
<feature type="region of interest" description="Disordered" evidence="3">
    <location>
        <begin position="128"/>
        <end position="155"/>
    </location>
</feature>
<feature type="coiled-coil region" evidence="2">
    <location>
        <begin position="195"/>
        <end position="258"/>
    </location>
</feature>
<feature type="short sequence motif" description="Required for magnesium transport activity">
    <location>
        <begin position="391"/>
        <end position="393"/>
    </location>
</feature>
<feature type="compositionally biased region" description="Polar residues" evidence="3">
    <location>
        <begin position="145"/>
        <end position="155"/>
    </location>
</feature>